<reference key="1">
    <citation type="journal article" date="2009" name="J. Bacteriol.">
        <title>Role of conjugative elements in the evolution of the multidrug-resistant pandemic clone Streptococcus pneumoniae Spain23F ST81.</title>
        <authorList>
            <person name="Croucher N.J."/>
            <person name="Walker D."/>
            <person name="Romero P."/>
            <person name="Lennard N."/>
            <person name="Paterson G.K."/>
            <person name="Bason N.C."/>
            <person name="Mitchell A.M."/>
            <person name="Quail M.A."/>
            <person name="Andrew P.W."/>
            <person name="Parkhill J."/>
            <person name="Bentley S.D."/>
            <person name="Mitchell T.J."/>
        </authorList>
    </citation>
    <scope>NUCLEOTIDE SEQUENCE [LARGE SCALE GENOMIC DNA]</scope>
    <source>
        <strain>ATCC 700669 / Spain 23F-1</strain>
    </source>
</reference>
<sequence>MEIKFTIKQVVAVGIGAALFVVIGMINIPTPVPNTSIQLQYAVQALLSIIFGPIIGLLVGLIGHAIKDSLAGYGLWWTWIIASGLFGLVVGLFRKYVRVINGVFDWKDILIFNLIQLLANALVWGVLAPLGDVVIYQEAAEKVFAQGIVAGIANGVSVAIAGTLLLLAYAGTQTRAGSLKKD</sequence>
<comment type="subcellular location">
    <subcellularLocation>
        <location evidence="1">Cell membrane</location>
        <topology evidence="1">Multi-pass membrane protein</topology>
    </subcellularLocation>
</comment>
<comment type="similarity">
    <text evidence="1">Belongs to the UPF0397 family.</text>
</comment>
<proteinExistence type="inferred from homology"/>
<name>Y439_STRPJ</name>
<dbReference type="EMBL" id="FM211187">
    <property type="protein sequence ID" value="CAR68286.1"/>
    <property type="molecule type" value="Genomic_DNA"/>
</dbReference>
<dbReference type="RefSeq" id="WP_000403162.1">
    <property type="nucleotide sequence ID" value="NC_011900.1"/>
</dbReference>
<dbReference type="SMR" id="B8ZLW2"/>
<dbReference type="KEGG" id="sne:SPN23F04390"/>
<dbReference type="HOGENOM" id="CLU_120023_0_0_9"/>
<dbReference type="GO" id="GO:0005886">
    <property type="term" value="C:plasma membrane"/>
    <property type="evidence" value="ECO:0007669"/>
    <property type="project" value="UniProtKB-SubCell"/>
</dbReference>
<dbReference type="Gene3D" id="1.10.1760.20">
    <property type="match status" value="1"/>
</dbReference>
<dbReference type="HAMAP" id="MF_01572">
    <property type="entry name" value="UPF0397"/>
    <property type="match status" value="1"/>
</dbReference>
<dbReference type="InterPro" id="IPR009825">
    <property type="entry name" value="ECF_substrate-spec-like"/>
</dbReference>
<dbReference type="InterPro" id="IPR022914">
    <property type="entry name" value="UPF0397"/>
</dbReference>
<dbReference type="NCBIfam" id="NF010182">
    <property type="entry name" value="PRK13661.1"/>
    <property type="match status" value="1"/>
</dbReference>
<dbReference type="PANTHER" id="PTHR37815">
    <property type="entry name" value="UPF0397 PROTEIN BC_2624-RELATED"/>
    <property type="match status" value="1"/>
</dbReference>
<dbReference type="PANTHER" id="PTHR37815:SF3">
    <property type="entry name" value="UPF0397 PROTEIN SPR0429"/>
    <property type="match status" value="1"/>
</dbReference>
<dbReference type="Pfam" id="PF07155">
    <property type="entry name" value="ECF-ribofla_trS"/>
    <property type="match status" value="1"/>
</dbReference>
<feature type="chain" id="PRO_1000185570" description="UPF0397 protein SPN23F04390">
    <location>
        <begin position="1"/>
        <end position="182"/>
    </location>
</feature>
<feature type="transmembrane region" description="Helical" evidence="1">
    <location>
        <begin position="10"/>
        <end position="30"/>
    </location>
</feature>
<feature type="transmembrane region" description="Helical" evidence="1">
    <location>
        <begin position="46"/>
        <end position="66"/>
    </location>
</feature>
<feature type="transmembrane region" description="Helical" evidence="1">
    <location>
        <begin position="73"/>
        <end position="93"/>
    </location>
</feature>
<feature type="transmembrane region" description="Helical" evidence="1">
    <location>
        <begin position="109"/>
        <end position="129"/>
    </location>
</feature>
<feature type="transmembrane region" description="Helical" evidence="1">
    <location>
        <begin position="148"/>
        <end position="168"/>
    </location>
</feature>
<protein>
    <recommendedName>
        <fullName evidence="1">UPF0397 protein SPN23F04390</fullName>
    </recommendedName>
</protein>
<evidence type="ECO:0000255" key="1">
    <source>
        <dbReference type="HAMAP-Rule" id="MF_01572"/>
    </source>
</evidence>
<gene>
    <name type="ordered locus">SPN23F04390</name>
</gene>
<organism>
    <name type="scientific">Streptococcus pneumoniae (strain ATCC 700669 / Spain 23F-1)</name>
    <dbReference type="NCBI Taxonomy" id="561276"/>
    <lineage>
        <taxon>Bacteria</taxon>
        <taxon>Bacillati</taxon>
        <taxon>Bacillota</taxon>
        <taxon>Bacilli</taxon>
        <taxon>Lactobacillales</taxon>
        <taxon>Streptococcaceae</taxon>
        <taxon>Streptococcus</taxon>
    </lineage>
</organism>
<keyword id="KW-1003">Cell membrane</keyword>
<keyword id="KW-0472">Membrane</keyword>
<keyword id="KW-0812">Transmembrane</keyword>
<keyword id="KW-1133">Transmembrane helix</keyword>
<accession>B8ZLW2</accession>